<reference key="1">
    <citation type="journal article" date="1997" name="Nature">
        <title>Genomic sequence of a Lyme disease spirochaete, Borrelia burgdorferi.</title>
        <authorList>
            <person name="Fraser C.M."/>
            <person name="Casjens S."/>
            <person name="Huang W.M."/>
            <person name="Sutton G.G."/>
            <person name="Clayton R.A."/>
            <person name="Lathigra R."/>
            <person name="White O."/>
            <person name="Ketchum K.A."/>
            <person name="Dodson R.J."/>
            <person name="Hickey E.K."/>
            <person name="Gwinn M.L."/>
            <person name="Dougherty B.A."/>
            <person name="Tomb J.-F."/>
            <person name="Fleischmann R.D."/>
            <person name="Richardson D.L."/>
            <person name="Peterson J.D."/>
            <person name="Kerlavage A.R."/>
            <person name="Quackenbush J."/>
            <person name="Salzberg S.L."/>
            <person name="Hanson M."/>
            <person name="van Vugt R."/>
            <person name="Palmer N."/>
            <person name="Adams M.D."/>
            <person name="Gocayne J.D."/>
            <person name="Weidman J.F."/>
            <person name="Utterback T.R."/>
            <person name="Watthey L."/>
            <person name="McDonald L.A."/>
            <person name="Artiach P."/>
            <person name="Bowman C."/>
            <person name="Garland S.A."/>
            <person name="Fujii C."/>
            <person name="Cotton M.D."/>
            <person name="Horst K."/>
            <person name="Roberts K.M."/>
            <person name="Hatch B."/>
            <person name="Smith H.O."/>
            <person name="Venter J.C."/>
        </authorList>
    </citation>
    <scope>NUCLEOTIDE SEQUENCE [LARGE SCALE GENOMIC DNA]</scope>
    <source>
        <strain>ATCC 35210 / DSM 4680 / CIP 102532 / B31</strain>
    </source>
</reference>
<evidence type="ECO:0000255" key="1">
    <source>
        <dbReference type="HAMAP-Rule" id="MF_01302"/>
    </source>
</evidence>
<evidence type="ECO:0000305" key="2"/>
<dbReference type="EMBL" id="AE000783">
    <property type="protein sequence ID" value="AAC66850.1"/>
    <property type="molecule type" value="Genomic_DNA"/>
</dbReference>
<dbReference type="PIR" id="C70161">
    <property type="entry name" value="C70161"/>
</dbReference>
<dbReference type="RefSeq" id="NP_212626.1">
    <property type="nucleotide sequence ID" value="NC_001318.1"/>
</dbReference>
<dbReference type="RefSeq" id="WP_002657008.1">
    <property type="nucleotide sequence ID" value="NC_001318.1"/>
</dbReference>
<dbReference type="PDB" id="8FMW">
    <property type="method" value="EM"/>
    <property type="resolution" value="2.86 A"/>
    <property type="chains" value="H=1-132"/>
</dbReference>
<dbReference type="PDBsum" id="8FMW"/>
<dbReference type="EMDB" id="EMD-29298"/>
<dbReference type="SMR" id="O51445"/>
<dbReference type="STRING" id="224326.BB_0492"/>
<dbReference type="PaxDb" id="224326-BB_0492"/>
<dbReference type="EnsemblBacteria" id="AAC66850">
    <property type="protein sequence ID" value="AAC66850"/>
    <property type="gene ID" value="BB_0492"/>
</dbReference>
<dbReference type="KEGG" id="bbu:BB_0492"/>
<dbReference type="PATRIC" id="fig|224326.49.peg.883"/>
<dbReference type="HOGENOM" id="CLU_098428_0_2_12"/>
<dbReference type="OrthoDB" id="9802617at2"/>
<dbReference type="Proteomes" id="UP000001807">
    <property type="component" value="Chromosome"/>
</dbReference>
<dbReference type="GO" id="GO:1990904">
    <property type="term" value="C:ribonucleoprotein complex"/>
    <property type="evidence" value="ECO:0007669"/>
    <property type="project" value="UniProtKB-KW"/>
</dbReference>
<dbReference type="GO" id="GO:0005840">
    <property type="term" value="C:ribosome"/>
    <property type="evidence" value="ECO:0007669"/>
    <property type="project" value="UniProtKB-KW"/>
</dbReference>
<dbReference type="GO" id="GO:0019843">
    <property type="term" value="F:rRNA binding"/>
    <property type="evidence" value="ECO:0007669"/>
    <property type="project" value="UniProtKB-UniRule"/>
</dbReference>
<dbReference type="GO" id="GO:0003735">
    <property type="term" value="F:structural constituent of ribosome"/>
    <property type="evidence" value="ECO:0007669"/>
    <property type="project" value="InterPro"/>
</dbReference>
<dbReference type="GO" id="GO:0006412">
    <property type="term" value="P:translation"/>
    <property type="evidence" value="ECO:0007669"/>
    <property type="project" value="UniProtKB-UniRule"/>
</dbReference>
<dbReference type="FunFam" id="3.30.1370.30:FF:000002">
    <property type="entry name" value="30S ribosomal protein S8"/>
    <property type="match status" value="1"/>
</dbReference>
<dbReference type="FunFam" id="3.30.1490.10:FF:000001">
    <property type="entry name" value="30S ribosomal protein S8"/>
    <property type="match status" value="1"/>
</dbReference>
<dbReference type="Gene3D" id="3.30.1370.30">
    <property type="match status" value="1"/>
</dbReference>
<dbReference type="Gene3D" id="3.30.1490.10">
    <property type="match status" value="1"/>
</dbReference>
<dbReference type="HAMAP" id="MF_01302_B">
    <property type="entry name" value="Ribosomal_uS8_B"/>
    <property type="match status" value="1"/>
</dbReference>
<dbReference type="InterPro" id="IPR000630">
    <property type="entry name" value="Ribosomal_uS8"/>
</dbReference>
<dbReference type="InterPro" id="IPR047863">
    <property type="entry name" value="Ribosomal_uS8_CS"/>
</dbReference>
<dbReference type="InterPro" id="IPR035987">
    <property type="entry name" value="Ribosomal_uS8_sf"/>
</dbReference>
<dbReference type="NCBIfam" id="NF001109">
    <property type="entry name" value="PRK00136.1"/>
    <property type="match status" value="1"/>
</dbReference>
<dbReference type="PANTHER" id="PTHR11758">
    <property type="entry name" value="40S RIBOSOMAL PROTEIN S15A"/>
    <property type="match status" value="1"/>
</dbReference>
<dbReference type="Pfam" id="PF00410">
    <property type="entry name" value="Ribosomal_S8"/>
    <property type="match status" value="1"/>
</dbReference>
<dbReference type="SUPFAM" id="SSF56047">
    <property type="entry name" value="Ribosomal protein S8"/>
    <property type="match status" value="1"/>
</dbReference>
<dbReference type="PROSITE" id="PS00053">
    <property type="entry name" value="RIBOSOMAL_S8"/>
    <property type="match status" value="1"/>
</dbReference>
<protein>
    <recommendedName>
        <fullName evidence="1">Small ribosomal subunit protein uS8</fullName>
    </recommendedName>
    <alternativeName>
        <fullName evidence="2">30S ribosomal protein S8</fullName>
    </alternativeName>
</protein>
<keyword id="KW-0002">3D-structure</keyword>
<keyword id="KW-1185">Reference proteome</keyword>
<keyword id="KW-0687">Ribonucleoprotein</keyword>
<keyword id="KW-0689">Ribosomal protein</keyword>
<keyword id="KW-0694">RNA-binding</keyword>
<keyword id="KW-0699">rRNA-binding</keyword>
<gene>
    <name evidence="1" type="primary">rpsH</name>
    <name type="ordered locus">BB_0492</name>
</gene>
<proteinExistence type="evidence at protein level"/>
<feature type="chain" id="PRO_0000126373" description="Small ribosomal subunit protein uS8">
    <location>
        <begin position="1"/>
        <end position="132"/>
    </location>
</feature>
<sequence>MAITYSIGDMLTKLRNASRVGHGSVDLKMSNMNKSILNILKEEGYIKDFNFLEKKGIAFIRVLLKYDNKRNPVINKIDAISTPGRKIYSSYRNMPRIKNGYGILIISSSQGVITGKEAKDKKIGGELICSVW</sequence>
<accession>O51445</accession>
<organism>
    <name type="scientific">Borreliella burgdorferi (strain ATCC 35210 / DSM 4680 / CIP 102532 / B31)</name>
    <name type="common">Borrelia burgdorferi</name>
    <dbReference type="NCBI Taxonomy" id="224326"/>
    <lineage>
        <taxon>Bacteria</taxon>
        <taxon>Pseudomonadati</taxon>
        <taxon>Spirochaetota</taxon>
        <taxon>Spirochaetia</taxon>
        <taxon>Spirochaetales</taxon>
        <taxon>Borreliaceae</taxon>
        <taxon>Borreliella</taxon>
    </lineage>
</organism>
<comment type="function">
    <text evidence="1">One of the primary rRNA binding proteins, it binds directly to 16S rRNA central domain where it helps coordinate assembly of the platform of the 30S subunit.</text>
</comment>
<comment type="subunit">
    <text evidence="1">Part of the 30S ribosomal subunit. Contacts proteins S5 and S12.</text>
</comment>
<comment type="similarity">
    <text evidence="1">Belongs to the universal ribosomal protein uS8 family.</text>
</comment>
<name>RS8_BORBU</name>